<organism>
    <name type="scientific">Haloquadratum walsbyi (strain DSM 16790 / HBSQ001)</name>
    <dbReference type="NCBI Taxonomy" id="362976"/>
    <lineage>
        <taxon>Archaea</taxon>
        <taxon>Methanobacteriati</taxon>
        <taxon>Methanobacteriota</taxon>
        <taxon>Stenosarchaea group</taxon>
        <taxon>Halobacteria</taxon>
        <taxon>Halobacteriales</taxon>
        <taxon>Haloferacaceae</taxon>
        <taxon>Haloquadratum</taxon>
    </lineage>
</organism>
<reference key="1">
    <citation type="journal article" date="2006" name="BMC Genomics">
        <title>The genome of the square archaeon Haloquadratum walsbyi: life at the limits of water activity.</title>
        <authorList>
            <person name="Bolhuis H."/>
            <person name="Palm P."/>
            <person name="Wende A."/>
            <person name="Falb M."/>
            <person name="Rampp M."/>
            <person name="Rodriguez-Valera F."/>
            <person name="Pfeiffer F."/>
            <person name="Oesterhelt D."/>
        </authorList>
    </citation>
    <scope>NUCLEOTIDE SEQUENCE [LARGE SCALE GENOMIC DNA]</scope>
    <source>
        <strain>DSM 16790 / HBSQ001</strain>
    </source>
</reference>
<dbReference type="EMBL" id="AM180088">
    <property type="protein sequence ID" value="CAJ52944.1"/>
    <property type="molecule type" value="Genomic_DNA"/>
</dbReference>
<dbReference type="RefSeq" id="WP_011572057.1">
    <property type="nucleotide sequence ID" value="NC_008212.1"/>
</dbReference>
<dbReference type="SMR" id="Q18GF4"/>
<dbReference type="STRING" id="362976.HQ_2837A"/>
<dbReference type="GeneID" id="4194612"/>
<dbReference type="KEGG" id="hwa:HQ_2837A"/>
<dbReference type="eggNOG" id="arCOG04098">
    <property type="taxonomic scope" value="Archaea"/>
</dbReference>
<dbReference type="HOGENOM" id="CLU_083987_0_2_2"/>
<dbReference type="Proteomes" id="UP000001975">
    <property type="component" value="Chromosome"/>
</dbReference>
<dbReference type="GO" id="GO:0022625">
    <property type="term" value="C:cytosolic large ribosomal subunit"/>
    <property type="evidence" value="ECO:0007669"/>
    <property type="project" value="TreeGrafter"/>
</dbReference>
<dbReference type="GO" id="GO:0019843">
    <property type="term" value="F:rRNA binding"/>
    <property type="evidence" value="ECO:0007669"/>
    <property type="project" value="UniProtKB-UniRule"/>
</dbReference>
<dbReference type="GO" id="GO:0003735">
    <property type="term" value="F:structural constituent of ribosome"/>
    <property type="evidence" value="ECO:0007669"/>
    <property type="project" value="InterPro"/>
</dbReference>
<dbReference type="GO" id="GO:0002181">
    <property type="term" value="P:cytoplasmic translation"/>
    <property type="evidence" value="ECO:0007669"/>
    <property type="project" value="TreeGrafter"/>
</dbReference>
<dbReference type="Gene3D" id="3.90.470.10">
    <property type="entry name" value="Ribosomal protein L22/L17"/>
    <property type="match status" value="1"/>
</dbReference>
<dbReference type="HAMAP" id="MF_01331_A">
    <property type="entry name" value="Ribosomal_uL22_A"/>
    <property type="match status" value="1"/>
</dbReference>
<dbReference type="InterPro" id="IPR001063">
    <property type="entry name" value="Ribosomal_uL22"/>
</dbReference>
<dbReference type="InterPro" id="IPR018260">
    <property type="entry name" value="Ribosomal_uL22_CS"/>
</dbReference>
<dbReference type="InterPro" id="IPR005721">
    <property type="entry name" value="Ribosomal_uL22_euk/arc"/>
</dbReference>
<dbReference type="InterPro" id="IPR036394">
    <property type="entry name" value="Ribosomal_uL22_sf"/>
</dbReference>
<dbReference type="NCBIfam" id="NF003260">
    <property type="entry name" value="PRK04223.1"/>
    <property type="match status" value="1"/>
</dbReference>
<dbReference type="NCBIfam" id="TIGR01038">
    <property type="entry name" value="uL22_arch_euk"/>
    <property type="match status" value="1"/>
</dbReference>
<dbReference type="PANTHER" id="PTHR11593">
    <property type="entry name" value="60S RIBOSOMAL PROTEIN L17"/>
    <property type="match status" value="1"/>
</dbReference>
<dbReference type="PANTHER" id="PTHR11593:SF10">
    <property type="entry name" value="60S RIBOSOMAL PROTEIN L17"/>
    <property type="match status" value="1"/>
</dbReference>
<dbReference type="Pfam" id="PF00237">
    <property type="entry name" value="Ribosomal_L22"/>
    <property type="match status" value="1"/>
</dbReference>
<dbReference type="SUPFAM" id="SSF54843">
    <property type="entry name" value="Ribosomal protein L22"/>
    <property type="match status" value="1"/>
</dbReference>
<dbReference type="PROSITE" id="PS00464">
    <property type="entry name" value="RIBOSOMAL_L22"/>
    <property type="match status" value="1"/>
</dbReference>
<feature type="chain" id="PRO_1000052581" description="Large ribosomal subunit protein uL22">
    <location>
        <begin position="1"/>
        <end position="158"/>
    </location>
</feature>
<evidence type="ECO:0000255" key="1">
    <source>
        <dbReference type="HAMAP-Rule" id="MF_01331"/>
    </source>
</evidence>
<evidence type="ECO:0000305" key="2"/>
<proteinExistence type="inferred from homology"/>
<keyword id="KW-1185">Reference proteome</keyword>
<keyword id="KW-0687">Ribonucleoprotein</keyword>
<keyword id="KW-0689">Ribosomal protein</keyword>
<keyword id="KW-0694">RNA-binding</keyword>
<keyword id="KW-0699">rRNA-binding</keyword>
<protein>
    <recommendedName>
        <fullName evidence="1">Large ribosomal subunit protein uL22</fullName>
    </recommendedName>
    <alternativeName>
        <fullName evidence="2">50S ribosomal protein L22</fullName>
    </alternativeName>
</protein>
<sequence>MGINYSVKADPETTARGMLRDRPISLKHSKAIAREIKGMTIADAESYLDDVIAQRQSVPFRQHNSGVGHRSDIDGWDAGRYPEKASKAFLELIENVASNANEQGFDGNAMAIRHVAAHKVGERQGRKPRAFGSADPWNTTICDVELIIEQPGTDGVDI</sequence>
<accession>Q18GF4</accession>
<name>RL22_HALWD</name>
<comment type="function">
    <text evidence="1">This protein binds specifically to 23S rRNA. It makes multiple contacts with different domains of the 23S rRNA in the assembled 50S subunit and ribosome.</text>
</comment>
<comment type="function">
    <text evidence="1">The globular domain of the protein is located near the polypeptide exit tunnel on the outside of the subunit, while an extended beta-hairpin is found that lines the wall of the exit tunnel in the center of the 70S ribosome.</text>
</comment>
<comment type="subunit">
    <text evidence="1">Part of the 50S ribosomal subunit.</text>
</comment>
<comment type="similarity">
    <text evidence="1">Belongs to the universal ribosomal protein uL22 family.</text>
</comment>
<gene>
    <name evidence="1" type="primary">rpl22</name>
    <name type="ordered locus">HQ_2837A</name>
</gene>